<gene>
    <name evidence="2" type="primary">folE</name>
    <name type="ordered locus">CA_C3626</name>
</gene>
<accession>Q97D54</accession>
<comment type="catalytic activity">
    <reaction evidence="2">
        <text>GTP + H2O = 7,8-dihydroneopterin 3'-triphosphate + formate + H(+)</text>
        <dbReference type="Rhea" id="RHEA:17473"/>
        <dbReference type="ChEBI" id="CHEBI:15377"/>
        <dbReference type="ChEBI" id="CHEBI:15378"/>
        <dbReference type="ChEBI" id="CHEBI:15740"/>
        <dbReference type="ChEBI" id="CHEBI:37565"/>
        <dbReference type="ChEBI" id="CHEBI:58462"/>
        <dbReference type="EC" id="3.5.4.16"/>
    </reaction>
</comment>
<comment type="pathway">
    <text evidence="2">Cofactor biosynthesis; 7,8-dihydroneopterin triphosphate biosynthesis; 7,8-dihydroneopterin triphosphate from GTP: step 1/1.</text>
</comment>
<comment type="subunit">
    <text evidence="1">Toroid-shaped homodecamer, composed of two pentamers of five dimers.</text>
</comment>
<comment type="similarity">
    <text evidence="2">Belongs to the GTP cyclohydrolase I family.</text>
</comment>
<reference key="1">
    <citation type="journal article" date="2001" name="J. Bacteriol.">
        <title>Genome sequence and comparative analysis of the solvent-producing bacterium Clostridium acetobutylicum.</title>
        <authorList>
            <person name="Noelling J."/>
            <person name="Breton G."/>
            <person name="Omelchenko M.V."/>
            <person name="Makarova K.S."/>
            <person name="Zeng Q."/>
            <person name="Gibson R."/>
            <person name="Lee H.M."/>
            <person name="Dubois J."/>
            <person name="Qiu D."/>
            <person name="Hitti J."/>
            <person name="Wolf Y.I."/>
            <person name="Tatusov R.L."/>
            <person name="Sabathe F."/>
            <person name="Doucette-Stamm L.A."/>
            <person name="Soucaille P."/>
            <person name="Daly M.J."/>
            <person name="Bennett G.N."/>
            <person name="Koonin E.V."/>
            <person name="Smith D.R."/>
        </authorList>
    </citation>
    <scope>NUCLEOTIDE SEQUENCE [LARGE SCALE GENOMIC DNA]</scope>
    <source>
        <strain>ATCC 824 / DSM 792 / JCM 1419 / IAM 19013 / LMG 5710 / NBRC 13948 / NRRL B-527 / VKM B-1787 / 2291 / W</strain>
    </source>
</reference>
<name>GCH1_CLOAB</name>
<dbReference type="EC" id="3.5.4.16" evidence="2"/>
<dbReference type="EMBL" id="AE001437">
    <property type="protein sequence ID" value="AAK81549.1"/>
    <property type="molecule type" value="Genomic_DNA"/>
</dbReference>
<dbReference type="PIR" id="B97345">
    <property type="entry name" value="B97345"/>
</dbReference>
<dbReference type="RefSeq" id="NP_350209.1">
    <property type="nucleotide sequence ID" value="NC_003030.1"/>
</dbReference>
<dbReference type="RefSeq" id="WP_010966889.1">
    <property type="nucleotide sequence ID" value="NC_003030.1"/>
</dbReference>
<dbReference type="SMR" id="Q97D54"/>
<dbReference type="STRING" id="272562.CA_C3626"/>
<dbReference type="GeneID" id="45000124"/>
<dbReference type="KEGG" id="cac:CA_C3626"/>
<dbReference type="PATRIC" id="fig|272562.8.peg.3816"/>
<dbReference type="eggNOG" id="COG0302">
    <property type="taxonomic scope" value="Bacteria"/>
</dbReference>
<dbReference type="HOGENOM" id="CLU_049768_3_2_9"/>
<dbReference type="OrthoDB" id="9801207at2"/>
<dbReference type="UniPathway" id="UPA00848">
    <property type="reaction ID" value="UER00151"/>
</dbReference>
<dbReference type="Proteomes" id="UP000000814">
    <property type="component" value="Chromosome"/>
</dbReference>
<dbReference type="GO" id="GO:0005737">
    <property type="term" value="C:cytoplasm"/>
    <property type="evidence" value="ECO:0007669"/>
    <property type="project" value="TreeGrafter"/>
</dbReference>
<dbReference type="GO" id="GO:0005525">
    <property type="term" value="F:GTP binding"/>
    <property type="evidence" value="ECO:0007669"/>
    <property type="project" value="UniProtKB-KW"/>
</dbReference>
<dbReference type="GO" id="GO:0003934">
    <property type="term" value="F:GTP cyclohydrolase I activity"/>
    <property type="evidence" value="ECO:0007669"/>
    <property type="project" value="UniProtKB-UniRule"/>
</dbReference>
<dbReference type="GO" id="GO:0008270">
    <property type="term" value="F:zinc ion binding"/>
    <property type="evidence" value="ECO:0007669"/>
    <property type="project" value="UniProtKB-UniRule"/>
</dbReference>
<dbReference type="GO" id="GO:0006730">
    <property type="term" value="P:one-carbon metabolic process"/>
    <property type="evidence" value="ECO:0007669"/>
    <property type="project" value="UniProtKB-UniRule"/>
</dbReference>
<dbReference type="GO" id="GO:0006729">
    <property type="term" value="P:tetrahydrobiopterin biosynthetic process"/>
    <property type="evidence" value="ECO:0007669"/>
    <property type="project" value="TreeGrafter"/>
</dbReference>
<dbReference type="GO" id="GO:0046654">
    <property type="term" value="P:tetrahydrofolate biosynthetic process"/>
    <property type="evidence" value="ECO:0007669"/>
    <property type="project" value="UniProtKB-UniRule"/>
</dbReference>
<dbReference type="FunFam" id="1.10.286.10:FF:000007">
    <property type="entry name" value="GTP cyclohydrolase 1"/>
    <property type="match status" value="1"/>
</dbReference>
<dbReference type="FunFam" id="3.30.1130.10:FF:000001">
    <property type="entry name" value="GTP cyclohydrolase 1"/>
    <property type="match status" value="1"/>
</dbReference>
<dbReference type="Gene3D" id="1.10.286.10">
    <property type="match status" value="1"/>
</dbReference>
<dbReference type="Gene3D" id="3.30.1130.10">
    <property type="match status" value="1"/>
</dbReference>
<dbReference type="HAMAP" id="MF_00223">
    <property type="entry name" value="FolE"/>
    <property type="match status" value="1"/>
</dbReference>
<dbReference type="InterPro" id="IPR043133">
    <property type="entry name" value="GTP-CH-I_C/QueF"/>
</dbReference>
<dbReference type="InterPro" id="IPR043134">
    <property type="entry name" value="GTP-CH-I_N"/>
</dbReference>
<dbReference type="InterPro" id="IPR001474">
    <property type="entry name" value="GTP_CycHdrlase_I"/>
</dbReference>
<dbReference type="InterPro" id="IPR018234">
    <property type="entry name" value="GTP_CycHdrlase_I_CS"/>
</dbReference>
<dbReference type="InterPro" id="IPR020602">
    <property type="entry name" value="GTP_CycHdrlase_I_dom"/>
</dbReference>
<dbReference type="NCBIfam" id="TIGR00063">
    <property type="entry name" value="folE"/>
    <property type="match status" value="1"/>
</dbReference>
<dbReference type="NCBIfam" id="NF006825">
    <property type="entry name" value="PRK09347.1-2"/>
    <property type="match status" value="1"/>
</dbReference>
<dbReference type="NCBIfam" id="NF006826">
    <property type="entry name" value="PRK09347.1-3"/>
    <property type="match status" value="1"/>
</dbReference>
<dbReference type="PANTHER" id="PTHR11109:SF7">
    <property type="entry name" value="GTP CYCLOHYDROLASE 1"/>
    <property type="match status" value="1"/>
</dbReference>
<dbReference type="PANTHER" id="PTHR11109">
    <property type="entry name" value="GTP CYCLOHYDROLASE I"/>
    <property type="match status" value="1"/>
</dbReference>
<dbReference type="Pfam" id="PF01227">
    <property type="entry name" value="GTP_cyclohydroI"/>
    <property type="match status" value="1"/>
</dbReference>
<dbReference type="SUPFAM" id="SSF55620">
    <property type="entry name" value="Tetrahydrobiopterin biosynthesis enzymes-like"/>
    <property type="match status" value="1"/>
</dbReference>
<dbReference type="PROSITE" id="PS00859">
    <property type="entry name" value="GTP_CYCLOHYDROL_1_1"/>
    <property type="match status" value="1"/>
</dbReference>
<protein>
    <recommendedName>
        <fullName evidence="2">GTP cyclohydrolase 1</fullName>
        <ecNumber evidence="2">3.5.4.16</ecNumber>
    </recommendedName>
    <alternativeName>
        <fullName evidence="2">GTP cyclohydrolase I</fullName>
        <shortName evidence="2">GTP-CH-I</shortName>
    </alternativeName>
</protein>
<organism>
    <name type="scientific">Clostridium acetobutylicum (strain ATCC 824 / DSM 792 / JCM 1419 / IAM 19013 / LMG 5710 / NBRC 13948 / NRRL B-527 / VKM B-1787 / 2291 / W)</name>
    <dbReference type="NCBI Taxonomy" id="272562"/>
    <lineage>
        <taxon>Bacteria</taxon>
        <taxon>Bacillati</taxon>
        <taxon>Bacillota</taxon>
        <taxon>Clostridia</taxon>
        <taxon>Eubacteriales</taxon>
        <taxon>Clostridiaceae</taxon>
        <taxon>Clostridium</taxon>
    </lineage>
</organism>
<keyword id="KW-0342">GTP-binding</keyword>
<keyword id="KW-0378">Hydrolase</keyword>
<keyword id="KW-0479">Metal-binding</keyword>
<keyword id="KW-0547">Nucleotide-binding</keyword>
<keyword id="KW-0554">One-carbon metabolism</keyword>
<keyword id="KW-1185">Reference proteome</keyword>
<keyword id="KW-0862">Zinc</keyword>
<evidence type="ECO:0000250" key="1"/>
<evidence type="ECO:0000255" key="2">
    <source>
        <dbReference type="HAMAP-Rule" id="MF_00223"/>
    </source>
</evidence>
<proteinExistence type="inferred from homology"/>
<sequence length="195" mass="22108">MSIDTKAIEKHIRGILIALGDDPDREGLKETPKRVAKMYEEVFKGMEYSNDDIAEMFNKTFEEDLKESEEDNIVLVKDIEIFSHCEHHLTLMYNMTVAVAYIPNKRLIGLSKIARIADMVSRRLQLQERIGKDIAEIMEKVTASKDIAVIIKGEHGCMTSRGIKKPGALTTTMTLKGRFKNDDSLVTKLMALYKA</sequence>
<feature type="chain" id="PRO_0000119398" description="GTP cyclohydrolase 1">
    <location>
        <begin position="1"/>
        <end position="195"/>
    </location>
</feature>
<feature type="binding site" evidence="2">
    <location>
        <position position="85"/>
    </location>
    <ligand>
        <name>Zn(2+)</name>
        <dbReference type="ChEBI" id="CHEBI:29105"/>
    </ligand>
</feature>
<feature type="binding site" evidence="2">
    <location>
        <position position="88"/>
    </location>
    <ligand>
        <name>Zn(2+)</name>
        <dbReference type="ChEBI" id="CHEBI:29105"/>
    </ligand>
</feature>
<feature type="binding site" evidence="2">
    <location>
        <position position="157"/>
    </location>
    <ligand>
        <name>Zn(2+)</name>
        <dbReference type="ChEBI" id="CHEBI:29105"/>
    </ligand>
</feature>